<organism>
    <name type="scientific">Halobacterium salinarum (strain ATCC 700922 / JCM 11081 / NRC-1)</name>
    <name type="common">Halobacterium halobium</name>
    <dbReference type="NCBI Taxonomy" id="64091"/>
    <lineage>
        <taxon>Archaea</taxon>
        <taxon>Methanobacteriati</taxon>
        <taxon>Methanobacteriota</taxon>
        <taxon>Stenosarchaea group</taxon>
        <taxon>Halobacteria</taxon>
        <taxon>Halobacteriales</taxon>
        <taxon>Halobacteriaceae</taxon>
        <taxon>Halobacterium</taxon>
        <taxon>Halobacterium salinarum NRC-34001</taxon>
    </lineage>
</organism>
<protein>
    <recommendedName>
        <fullName evidence="3">Probable beta-carotene 15,15'-dioxygenase Blh</fullName>
        <ecNumber evidence="1">1.13.11.63</ecNumber>
    </recommendedName>
    <alternativeName>
        <fullName>Brp-like homolog</fullName>
    </alternativeName>
</protein>
<accession>Q9HNE6</accession>
<gene>
    <name type="primary">blh</name>
    <name type="ordered locus">VNG_2136G</name>
</gene>
<comment type="function">
    <text evidence="2">Appears to partially substitute for Brp function in retinal biosynthesis during bacteriorhodopsin production. Probably catalyzes the cleavage of beta-carotene at its central double bond (15,15') to yield two molecules of all-trans-retinal.</text>
</comment>
<comment type="catalytic activity">
    <reaction evidence="1">
        <text>all-trans-beta-carotene + O2 = 2 all-trans-retinal</text>
        <dbReference type="Rhea" id="RHEA:32887"/>
        <dbReference type="ChEBI" id="CHEBI:15379"/>
        <dbReference type="ChEBI" id="CHEBI:17579"/>
        <dbReference type="ChEBI" id="CHEBI:17898"/>
        <dbReference type="EC" id="1.13.11.63"/>
    </reaction>
</comment>
<comment type="cofactor">
    <cofactor evidence="1">
        <name>Fe(2+)</name>
        <dbReference type="ChEBI" id="CHEBI:29033"/>
    </cofactor>
</comment>
<comment type="subcellular location">
    <subcellularLocation>
        <location evidence="1 3">Cell membrane</location>
        <topology evidence="1 3">Multi-pass membrane protein</topology>
    </subcellularLocation>
</comment>
<comment type="disruption phenotype">
    <text evidence="2">In-frame deletion of blh reduces bacteriorhodopsin accumulation on solid medium but not in liquid. However, deletion of both brp and blh completely abolishes bacteriorhodopsin and retinal production in liquid medium, without affecting bacterioopsin accumulation, and the level of beta-carotene is increased by 5.3-fold.</text>
</comment>
<comment type="similarity">
    <text evidence="1 3">Belongs to the Brp/Blh beta-carotene diooxygenase family.</text>
</comment>
<comment type="sequence caution" evidence="3">
    <conflict type="erroneous initiation">
        <sequence resource="EMBL-CDS" id="AAG20274"/>
    </conflict>
    <text>Truncated N-terminus.</text>
</comment>
<dbReference type="EC" id="1.13.11.63" evidence="1"/>
<dbReference type="EMBL" id="AE004437">
    <property type="protein sequence ID" value="AAG20274.1"/>
    <property type="status" value="ALT_INIT"/>
    <property type="molecule type" value="Genomic_DNA"/>
</dbReference>
<dbReference type="PIR" id="F84363">
    <property type="entry name" value="F84363"/>
</dbReference>
<dbReference type="SMR" id="Q9HNE6"/>
<dbReference type="STRING" id="64091.VNG_2136G"/>
<dbReference type="PaxDb" id="64091-VNG_2136G"/>
<dbReference type="KEGG" id="hal:VNG_2136G"/>
<dbReference type="PATRIC" id="fig|64091.14.peg.1633"/>
<dbReference type="HOGENOM" id="CLU_068196_0_0_2"/>
<dbReference type="InParanoid" id="Q9HNE6"/>
<dbReference type="Proteomes" id="UP000000554">
    <property type="component" value="Chromosome"/>
</dbReference>
<dbReference type="GO" id="GO:0005886">
    <property type="term" value="C:plasma membrane"/>
    <property type="evidence" value="ECO:0007669"/>
    <property type="project" value="UniProtKB-SubCell"/>
</dbReference>
<dbReference type="GO" id="GO:0003834">
    <property type="term" value="F:beta-carotene 15,15'-dioxygenase activity"/>
    <property type="evidence" value="ECO:0007669"/>
    <property type="project" value="UniProtKB-EC"/>
</dbReference>
<dbReference type="GO" id="GO:0010436">
    <property type="term" value="F:carotenoid dioxygenase activity"/>
    <property type="evidence" value="ECO:0007669"/>
    <property type="project" value="UniProtKB-UniRule"/>
</dbReference>
<dbReference type="GO" id="GO:0005506">
    <property type="term" value="F:iron ion binding"/>
    <property type="evidence" value="ECO:0007669"/>
    <property type="project" value="UniProtKB-UniRule"/>
</dbReference>
<dbReference type="GO" id="GO:0016121">
    <property type="term" value="P:carotene catabolic process"/>
    <property type="evidence" value="ECO:0007669"/>
    <property type="project" value="UniProtKB-UniRule"/>
</dbReference>
<dbReference type="GO" id="GO:0042574">
    <property type="term" value="P:retinal metabolic process"/>
    <property type="evidence" value="ECO:0000315"/>
    <property type="project" value="UniProtKB"/>
</dbReference>
<dbReference type="HAMAP" id="MF_02093">
    <property type="entry name" value="Beta_carotene_diox"/>
    <property type="match status" value="1"/>
</dbReference>
<dbReference type="InterPro" id="IPR022270">
    <property type="entry name" value="Blh_diox"/>
</dbReference>
<dbReference type="NCBIfam" id="TIGR03753">
    <property type="entry name" value="blh_monoox"/>
    <property type="match status" value="1"/>
</dbReference>
<dbReference type="Pfam" id="PF15461">
    <property type="entry name" value="BCD"/>
    <property type="match status" value="1"/>
</dbReference>
<evidence type="ECO:0000255" key="1">
    <source>
        <dbReference type="HAMAP-Rule" id="MF_02093"/>
    </source>
</evidence>
<evidence type="ECO:0000269" key="2">
    <source>
    </source>
</evidence>
<evidence type="ECO:0000305" key="3"/>
<sequence>MGASPVALTPLTARARRTLARPALALGWVAISIAALPAITGVSLSPTARYAPLVASAVVFGMPHGAIDYLALPRAVTGTVTVRWLAVVGVLYLVLGGGYAAAWFFAPVPAAFAFVAITWLHWGQGDLYPLLDFLDVDYLDTRPRRAATVLIRGGLPMLVPLLGFPERYRSVVDAFAAPFGGSVGDLAVFDPRVRLWLGVAFAAATVAVLAAGRRRTHSPGAWRVDAAETLLLWVFFFVVPPVFAVGVYFCVWHSVRHVARAIAVDGSVHPSLRAGDILGPLARFGVEAAPMTAAALALGGVLWWAVPNPPTTLESGAALYLVLIAVLTLPHVAVVTWMDRVQGVL</sequence>
<proteinExistence type="inferred from homology"/>
<feature type="chain" id="PRO_0000408498" description="Probable beta-carotene 15,15'-dioxygenase Blh">
    <location>
        <begin position="1"/>
        <end position="345"/>
    </location>
</feature>
<feature type="transmembrane region" description="Helical" evidence="1">
    <location>
        <begin position="24"/>
        <end position="44"/>
    </location>
</feature>
<feature type="transmembrane region" description="Helical" evidence="1">
    <location>
        <begin position="52"/>
        <end position="72"/>
    </location>
</feature>
<feature type="transmembrane region" description="Helical" evidence="1">
    <location>
        <begin position="85"/>
        <end position="105"/>
    </location>
</feature>
<feature type="transmembrane region" description="Helical" evidence="1">
    <location>
        <begin position="111"/>
        <end position="131"/>
    </location>
</feature>
<feature type="transmembrane region" description="Helical" evidence="1">
    <location>
        <begin position="146"/>
        <end position="166"/>
    </location>
</feature>
<feature type="transmembrane region" description="Helical" evidence="1">
    <location>
        <begin position="171"/>
        <end position="191"/>
    </location>
</feature>
<feature type="transmembrane region" description="Helical" evidence="1">
    <location>
        <begin position="192"/>
        <end position="212"/>
    </location>
</feature>
<feature type="transmembrane region" description="Helical" evidence="1">
    <location>
        <begin position="231"/>
        <end position="251"/>
    </location>
</feature>
<feature type="transmembrane region" description="Helical" evidence="1">
    <location>
        <begin position="286"/>
        <end position="306"/>
    </location>
</feature>
<feature type="transmembrane region" description="Helical" evidence="1">
    <location>
        <begin position="318"/>
        <end position="338"/>
    </location>
</feature>
<feature type="binding site" evidence="1">
    <location>
        <position position="64"/>
    </location>
    <ligand>
        <name>Fe cation</name>
        <dbReference type="ChEBI" id="CHEBI:24875"/>
    </ligand>
</feature>
<feature type="binding site" evidence="1">
    <location>
        <position position="121"/>
    </location>
    <ligand>
        <name>Fe cation</name>
        <dbReference type="ChEBI" id="CHEBI:24875"/>
    </ligand>
</feature>
<feature type="binding site" evidence="1">
    <location>
        <position position="253"/>
    </location>
    <ligand>
        <name>Fe cation</name>
        <dbReference type="ChEBI" id="CHEBI:24875"/>
    </ligand>
</feature>
<feature type="binding site" evidence="1">
    <location>
        <position position="257"/>
    </location>
    <ligand>
        <name>Fe cation</name>
        <dbReference type="ChEBI" id="CHEBI:24875"/>
    </ligand>
</feature>
<name>BLH_HALSA</name>
<reference key="1">
    <citation type="journal article" date="2000" name="Proc. Natl. Acad. Sci. U.S.A.">
        <title>Genome sequence of Halobacterium species NRC-1.</title>
        <authorList>
            <person name="Ng W.V."/>
            <person name="Kennedy S.P."/>
            <person name="Mahairas G.G."/>
            <person name="Berquist B."/>
            <person name="Pan M."/>
            <person name="Shukla H.D."/>
            <person name="Lasky S.R."/>
            <person name="Baliga N.S."/>
            <person name="Thorsson V."/>
            <person name="Sbrogna J."/>
            <person name="Swartzell S."/>
            <person name="Weir D."/>
            <person name="Hall J."/>
            <person name="Dahl T.A."/>
            <person name="Welti R."/>
            <person name="Goo Y.A."/>
            <person name="Leithauser B."/>
            <person name="Keller K."/>
            <person name="Cruz R."/>
            <person name="Danson M.J."/>
            <person name="Hough D.W."/>
            <person name="Maddocks D.G."/>
            <person name="Jablonski P.E."/>
            <person name="Krebs M.P."/>
            <person name="Angevine C.M."/>
            <person name="Dale H."/>
            <person name="Isenbarger T.A."/>
            <person name="Peck R.F."/>
            <person name="Pohlschroder M."/>
            <person name="Spudich J.L."/>
            <person name="Jung K.-H."/>
            <person name="Alam M."/>
            <person name="Freitas T."/>
            <person name="Hou S."/>
            <person name="Daniels C.J."/>
            <person name="Dennis P.P."/>
            <person name="Omer A.D."/>
            <person name="Ebhardt H."/>
            <person name="Lowe T.M."/>
            <person name="Liang P."/>
            <person name="Riley M."/>
            <person name="Hood L."/>
            <person name="DasSarma S."/>
        </authorList>
    </citation>
    <scope>NUCLEOTIDE SEQUENCE [LARGE SCALE GENOMIC DNA]</scope>
    <source>
        <strain>ATCC 700922 / JCM 11081 / NRC-1</strain>
    </source>
</reference>
<reference key="2">
    <citation type="journal article" date="2001" name="J. Biol. Chem.">
        <title>brp and blh are required for synthesis of the retinal cofactor of bacteriorhodopsin in Halobacterium salinarum.</title>
        <authorList>
            <person name="Peck R.F."/>
            <person name="Echavarri-Erasun C."/>
            <person name="Johnson E.A."/>
            <person name="Ng W.V."/>
            <person name="Kennedy S.P."/>
            <person name="Hood L."/>
            <person name="DasSarma S."/>
            <person name="Krebs M.P."/>
        </authorList>
    </citation>
    <scope>FUNCTION</scope>
    <scope>ROLE IN BACTERIORHODOPSIN AND RETINAL PRODUCTION</scope>
    <scope>DISRUPTION PHENOTYPE</scope>
    <source>
        <strain>MPK1</strain>
    </source>
</reference>
<keyword id="KW-1003">Cell membrane</keyword>
<keyword id="KW-0223">Dioxygenase</keyword>
<keyword id="KW-0408">Iron</keyword>
<keyword id="KW-0472">Membrane</keyword>
<keyword id="KW-0479">Metal-binding</keyword>
<keyword id="KW-0560">Oxidoreductase</keyword>
<keyword id="KW-1185">Reference proteome</keyword>
<keyword id="KW-0812">Transmembrane</keyword>
<keyword id="KW-1133">Transmembrane helix</keyword>